<reference key="1">
    <citation type="journal article" date="1999" name="J. Zool. Syst. Evol. Res.">
        <title>Marmot phylogeny revisited: molecular evidence for a diphyletic origin of sociality.</title>
        <authorList>
            <person name="Kruckenhauser L."/>
            <person name="Pinsker W."/>
            <person name="Haring E."/>
            <person name="Arnold W."/>
        </authorList>
    </citation>
    <scope>NUCLEOTIDE SEQUENCE [GENOMIC DNA]</scope>
</reference>
<reference key="2">
    <citation type="journal article" date="1999" name="Syst. Biol.">
        <title>Molecular phylogeny of the marmots (Rodentia: Sciuridae): tests of evolutionary and biogeographic hypotheses.</title>
        <authorList>
            <person name="Steppan S.J."/>
            <person name="Akhverdyan M.R."/>
            <person name="Lyapunova E.A."/>
            <person name="Fraser D.G."/>
            <person name="Vorontsov N.N."/>
            <person name="Hoffmann R.S."/>
            <person name="Braun M.J."/>
        </authorList>
    </citation>
    <scope>NUCLEOTIDE SEQUENCE [GENOMIC DNA]</scope>
    <source>
        <strain>Isolate IDB 23708</strain>
        <strain>Isolate IDB 23767</strain>
    </source>
</reference>
<geneLocation type="mitochondrion"/>
<comment type="function">
    <text evidence="2">Component of the ubiquinol-cytochrome c reductase complex (complex III or cytochrome b-c1 complex) that is part of the mitochondrial respiratory chain. The b-c1 complex mediates electron transfer from ubiquinol to cytochrome c. Contributes to the generation of a proton gradient across the mitochondrial membrane that is then used for ATP synthesis.</text>
</comment>
<comment type="cofactor">
    <cofactor evidence="2">
        <name>heme b</name>
        <dbReference type="ChEBI" id="CHEBI:60344"/>
    </cofactor>
    <text evidence="2">Binds 2 heme b groups non-covalently.</text>
</comment>
<comment type="subunit">
    <text evidence="2">The cytochrome bc1 complex contains 11 subunits: 3 respiratory subunits (MT-CYB, CYC1 and UQCRFS1), 2 core proteins (UQCRC1 and UQCRC2) and 6 low-molecular weight proteins (UQCRH/QCR6, UQCRB/QCR7, UQCRQ/QCR8, UQCR10/QCR9, UQCR11/QCR10 and a cleavage product of UQCRFS1). This cytochrome bc1 complex then forms a dimer.</text>
</comment>
<comment type="subcellular location">
    <subcellularLocation>
        <location evidence="2">Mitochondrion inner membrane</location>
        <topology evidence="2">Multi-pass membrane protein</topology>
    </subcellularLocation>
</comment>
<comment type="miscellaneous">
    <text evidence="1">Heme 1 (or BL or b562) is low-potential and absorbs at about 562 nm, and heme 2 (or BH or b566) is high-potential and absorbs at about 566 nm.</text>
</comment>
<comment type="similarity">
    <text evidence="3 4">Belongs to the cytochrome b family.</text>
</comment>
<comment type="caution">
    <text evidence="2">The full-length protein contains only eight transmembrane helices, not nine as predicted by bioinformatics tools.</text>
</comment>
<accession>Q9T3R3</accession>
<keyword id="KW-0249">Electron transport</keyword>
<keyword id="KW-0349">Heme</keyword>
<keyword id="KW-0408">Iron</keyword>
<keyword id="KW-0472">Membrane</keyword>
<keyword id="KW-0479">Metal-binding</keyword>
<keyword id="KW-0496">Mitochondrion</keyword>
<keyword id="KW-0999">Mitochondrion inner membrane</keyword>
<keyword id="KW-0679">Respiratory chain</keyword>
<keyword id="KW-0812">Transmembrane</keyword>
<keyword id="KW-1133">Transmembrane helix</keyword>
<keyword id="KW-0813">Transport</keyword>
<keyword id="KW-0830">Ubiquinone</keyword>
<sequence>MTNTRKTHPLIKIINHSFIDLPTPSNISTWWNFGSLLGLCLAIQILTGLFLAMHYTSDTMTAFSSVTHICRDVNYGWLIRYTHANGASMFFICLFLHVGRGMYYGSYTYFETWNIGVILLLVVMATAFMGYVLPWGQMSFWGATVITNLLSAIPYIGMTLVEWIWGGFSVDKATLTRFFAFHFILPFIITALVMVHLLFLHETGSNNPSGLISDSDKIPFHPYYTIKDILGALLLILILMILVLFSPDLLGDPDNYTPANPLSTPPHIKPEWYFLFAYAILRSIPNKLGGVLALIFSILILMLFPLLHLSKQRSMMFRPLSQCMFWILVADLITLTWIGGQPVEYPYIIIGQLASILYFTIILLILPTVSLIENKLLKW</sequence>
<feature type="chain" id="PRO_0000255067" description="Cytochrome b">
    <location>
        <begin position="1"/>
        <end position="379"/>
    </location>
</feature>
<feature type="transmembrane region" description="Helical" evidence="2">
    <location>
        <begin position="33"/>
        <end position="53"/>
    </location>
</feature>
<feature type="transmembrane region" description="Helical" evidence="2">
    <location>
        <begin position="77"/>
        <end position="98"/>
    </location>
</feature>
<feature type="transmembrane region" description="Helical" evidence="2">
    <location>
        <begin position="113"/>
        <end position="133"/>
    </location>
</feature>
<feature type="transmembrane region" description="Helical" evidence="2">
    <location>
        <begin position="178"/>
        <end position="198"/>
    </location>
</feature>
<feature type="transmembrane region" description="Helical" evidence="2">
    <location>
        <begin position="226"/>
        <end position="246"/>
    </location>
</feature>
<feature type="transmembrane region" description="Helical" evidence="2">
    <location>
        <begin position="288"/>
        <end position="308"/>
    </location>
</feature>
<feature type="transmembrane region" description="Helical" evidence="2">
    <location>
        <begin position="320"/>
        <end position="340"/>
    </location>
</feature>
<feature type="transmembrane region" description="Helical" evidence="2">
    <location>
        <begin position="347"/>
        <end position="367"/>
    </location>
</feature>
<feature type="binding site" description="axial binding residue" evidence="2">
    <location>
        <position position="83"/>
    </location>
    <ligand>
        <name>heme b</name>
        <dbReference type="ChEBI" id="CHEBI:60344"/>
        <label>b562</label>
    </ligand>
    <ligandPart>
        <name>Fe</name>
        <dbReference type="ChEBI" id="CHEBI:18248"/>
    </ligandPart>
</feature>
<feature type="binding site" description="axial binding residue" evidence="2">
    <location>
        <position position="97"/>
    </location>
    <ligand>
        <name>heme b</name>
        <dbReference type="ChEBI" id="CHEBI:60344"/>
        <label>b566</label>
    </ligand>
    <ligandPart>
        <name>Fe</name>
        <dbReference type="ChEBI" id="CHEBI:18248"/>
    </ligandPart>
</feature>
<feature type="binding site" description="axial binding residue" evidence="2">
    <location>
        <position position="182"/>
    </location>
    <ligand>
        <name>heme b</name>
        <dbReference type="ChEBI" id="CHEBI:60344"/>
        <label>b562</label>
    </ligand>
    <ligandPart>
        <name>Fe</name>
        <dbReference type="ChEBI" id="CHEBI:18248"/>
    </ligandPart>
</feature>
<feature type="binding site" description="axial binding residue" evidence="2">
    <location>
        <position position="196"/>
    </location>
    <ligand>
        <name>heme b</name>
        <dbReference type="ChEBI" id="CHEBI:60344"/>
        <label>b566</label>
    </ligand>
    <ligandPart>
        <name>Fe</name>
        <dbReference type="ChEBI" id="CHEBI:18248"/>
    </ligandPart>
</feature>
<feature type="binding site" evidence="2">
    <location>
        <position position="201"/>
    </location>
    <ligand>
        <name>a ubiquinone</name>
        <dbReference type="ChEBI" id="CHEBI:16389"/>
    </ligand>
</feature>
<organism>
    <name type="scientific">Marmota caudata</name>
    <name type="common">Long-tailed marmot</name>
    <dbReference type="NCBI Taxonomy" id="71802"/>
    <lineage>
        <taxon>Eukaryota</taxon>
        <taxon>Metazoa</taxon>
        <taxon>Chordata</taxon>
        <taxon>Craniata</taxon>
        <taxon>Vertebrata</taxon>
        <taxon>Euteleostomi</taxon>
        <taxon>Mammalia</taxon>
        <taxon>Eutheria</taxon>
        <taxon>Euarchontoglires</taxon>
        <taxon>Glires</taxon>
        <taxon>Rodentia</taxon>
        <taxon>Sciuromorpha</taxon>
        <taxon>Sciuridae</taxon>
        <taxon>Xerinae</taxon>
        <taxon>Marmotini</taxon>
        <taxon>Marmota</taxon>
    </lineage>
</organism>
<gene>
    <name type="primary">MT-CYB</name>
    <name type="synonym">COB</name>
    <name type="synonym">CYTB</name>
    <name type="synonym">MTCYB</name>
</gene>
<dbReference type="EMBL" id="AF100716">
    <property type="protein sequence ID" value="AAD45207.1"/>
    <property type="molecule type" value="Genomic_DNA"/>
</dbReference>
<dbReference type="EMBL" id="AF143924">
    <property type="protein sequence ID" value="AAD29731.1"/>
    <property type="molecule type" value="Genomic_DNA"/>
</dbReference>
<dbReference type="EMBL" id="AF143925">
    <property type="protein sequence ID" value="AAD29732.1"/>
    <property type="molecule type" value="Genomic_DNA"/>
</dbReference>
<dbReference type="SMR" id="Q9T3R3"/>
<dbReference type="GO" id="GO:0005743">
    <property type="term" value="C:mitochondrial inner membrane"/>
    <property type="evidence" value="ECO:0007669"/>
    <property type="project" value="UniProtKB-SubCell"/>
</dbReference>
<dbReference type="GO" id="GO:0045275">
    <property type="term" value="C:respiratory chain complex III"/>
    <property type="evidence" value="ECO:0007669"/>
    <property type="project" value="InterPro"/>
</dbReference>
<dbReference type="GO" id="GO:0046872">
    <property type="term" value="F:metal ion binding"/>
    <property type="evidence" value="ECO:0007669"/>
    <property type="project" value="UniProtKB-KW"/>
</dbReference>
<dbReference type="GO" id="GO:0008121">
    <property type="term" value="F:ubiquinol-cytochrome-c reductase activity"/>
    <property type="evidence" value="ECO:0007669"/>
    <property type="project" value="InterPro"/>
</dbReference>
<dbReference type="GO" id="GO:0006122">
    <property type="term" value="P:mitochondrial electron transport, ubiquinol to cytochrome c"/>
    <property type="evidence" value="ECO:0007669"/>
    <property type="project" value="TreeGrafter"/>
</dbReference>
<dbReference type="CDD" id="cd00290">
    <property type="entry name" value="cytochrome_b_C"/>
    <property type="match status" value="1"/>
</dbReference>
<dbReference type="CDD" id="cd00284">
    <property type="entry name" value="Cytochrome_b_N"/>
    <property type="match status" value="1"/>
</dbReference>
<dbReference type="FunFam" id="1.20.810.10:FF:000002">
    <property type="entry name" value="Cytochrome b"/>
    <property type="match status" value="1"/>
</dbReference>
<dbReference type="Gene3D" id="1.20.810.10">
    <property type="entry name" value="Cytochrome Bc1 Complex, Chain C"/>
    <property type="match status" value="1"/>
</dbReference>
<dbReference type="InterPro" id="IPR005798">
    <property type="entry name" value="Cyt_b/b6_C"/>
</dbReference>
<dbReference type="InterPro" id="IPR036150">
    <property type="entry name" value="Cyt_b/b6_C_sf"/>
</dbReference>
<dbReference type="InterPro" id="IPR005797">
    <property type="entry name" value="Cyt_b/b6_N"/>
</dbReference>
<dbReference type="InterPro" id="IPR027387">
    <property type="entry name" value="Cytb/b6-like_sf"/>
</dbReference>
<dbReference type="InterPro" id="IPR030689">
    <property type="entry name" value="Cytochrome_b"/>
</dbReference>
<dbReference type="InterPro" id="IPR048260">
    <property type="entry name" value="Cytochrome_b_C_euk/bac"/>
</dbReference>
<dbReference type="InterPro" id="IPR048259">
    <property type="entry name" value="Cytochrome_b_N_euk/bac"/>
</dbReference>
<dbReference type="InterPro" id="IPR016174">
    <property type="entry name" value="Di-haem_cyt_TM"/>
</dbReference>
<dbReference type="PANTHER" id="PTHR19271">
    <property type="entry name" value="CYTOCHROME B"/>
    <property type="match status" value="1"/>
</dbReference>
<dbReference type="PANTHER" id="PTHR19271:SF16">
    <property type="entry name" value="CYTOCHROME B"/>
    <property type="match status" value="1"/>
</dbReference>
<dbReference type="Pfam" id="PF00032">
    <property type="entry name" value="Cytochrom_B_C"/>
    <property type="match status" value="1"/>
</dbReference>
<dbReference type="Pfam" id="PF00033">
    <property type="entry name" value="Cytochrome_B"/>
    <property type="match status" value="1"/>
</dbReference>
<dbReference type="PIRSF" id="PIRSF038885">
    <property type="entry name" value="COB"/>
    <property type="match status" value="1"/>
</dbReference>
<dbReference type="SUPFAM" id="SSF81648">
    <property type="entry name" value="a domain/subunit of cytochrome bc1 complex (Ubiquinol-cytochrome c reductase)"/>
    <property type="match status" value="1"/>
</dbReference>
<dbReference type="SUPFAM" id="SSF81342">
    <property type="entry name" value="Transmembrane di-heme cytochromes"/>
    <property type="match status" value="1"/>
</dbReference>
<dbReference type="PROSITE" id="PS51003">
    <property type="entry name" value="CYTB_CTER"/>
    <property type="match status" value="1"/>
</dbReference>
<dbReference type="PROSITE" id="PS51002">
    <property type="entry name" value="CYTB_NTER"/>
    <property type="match status" value="1"/>
</dbReference>
<name>CYB_MARCU</name>
<protein>
    <recommendedName>
        <fullName>Cytochrome b</fullName>
    </recommendedName>
    <alternativeName>
        <fullName>Complex III subunit 3</fullName>
    </alternativeName>
    <alternativeName>
        <fullName>Complex III subunit III</fullName>
    </alternativeName>
    <alternativeName>
        <fullName>Cytochrome b-c1 complex subunit 3</fullName>
    </alternativeName>
    <alternativeName>
        <fullName>Ubiquinol-cytochrome-c reductase complex cytochrome b subunit</fullName>
    </alternativeName>
</protein>
<proteinExistence type="inferred from homology"/>
<evidence type="ECO:0000250" key="1"/>
<evidence type="ECO:0000250" key="2">
    <source>
        <dbReference type="UniProtKB" id="P00157"/>
    </source>
</evidence>
<evidence type="ECO:0000255" key="3">
    <source>
        <dbReference type="PROSITE-ProRule" id="PRU00967"/>
    </source>
</evidence>
<evidence type="ECO:0000255" key="4">
    <source>
        <dbReference type="PROSITE-ProRule" id="PRU00968"/>
    </source>
</evidence>